<name>SSB_BPLSK</name>
<protein>
    <recommendedName>
        <fullName>SSB protein</fullName>
    </recommendedName>
    <alternativeName>
        <fullName>Gene product 34</fullName>
        <shortName>Gp34</shortName>
    </alternativeName>
    <alternativeName>
        <fullName evidence="3">Single-stranded DNA binding protein</fullName>
    </alternativeName>
</protein>
<proteinExistence type="inferred from homology"/>
<evidence type="ECO:0000250" key="1">
    <source>
        <dbReference type="UniProtKB" id="Q6JM09"/>
    </source>
</evidence>
<evidence type="ECO:0000256" key="2">
    <source>
        <dbReference type="SAM" id="MobiDB-lite"/>
    </source>
</evidence>
<evidence type="ECO:0000305" key="3"/>
<sequence length="119" mass="12942">MAIITVTAQANEKNTRTVSTAKGDKKIISVPLFEKEKGSSVKVAYGSAFLPDFIQLGDTVTVSGRVQAKESGEYVNYNFVFPTVEKVFITNDNSSQSQAKQDLFGGSEPIEVNSEDLPF</sequence>
<comment type="function">
    <text evidence="1">Binds ssDNA with nanomolar affinity but no sequence specificity.</text>
</comment>
<comment type="subunit">
    <text evidence="1">Homodimer; two homodimers can further weakly assemble into a homotetramer.</text>
</comment>
<comment type="similarity">
    <text evidence="3">Belongs to the skunalikevirus SSB protein family.</text>
</comment>
<keyword id="KW-0238">DNA-binding</keyword>
<keyword id="KW-0244">Early protein</keyword>
<keyword id="KW-1185">Reference proteome</keyword>
<organism>
    <name type="scientific">Lactococcus phage SK1</name>
    <name type="common">Lactococcus lactis bacteriophage SK1</name>
    <dbReference type="NCBI Taxonomy" id="2905675"/>
    <lineage>
        <taxon>Viruses</taxon>
        <taxon>Duplodnaviria</taxon>
        <taxon>Heunggongvirae</taxon>
        <taxon>Uroviricota</taxon>
        <taxon>Caudoviricetes</taxon>
        <taxon>Skunavirus</taxon>
        <taxon>Skunavirus sk1</taxon>
    </lineage>
</organism>
<accession>O21902</accession>
<dbReference type="EMBL" id="AF011378">
    <property type="protein sequence ID" value="AAB70074.1"/>
    <property type="molecule type" value="Genomic_DNA"/>
</dbReference>
<dbReference type="RefSeq" id="NP_044980.1">
    <property type="nucleotide sequence ID" value="NC_001835.1"/>
</dbReference>
<dbReference type="SMR" id="O21902"/>
<dbReference type="GeneID" id="1261307"/>
<dbReference type="KEGG" id="vg:1261307"/>
<dbReference type="Proteomes" id="UP000000839">
    <property type="component" value="Genome"/>
</dbReference>
<dbReference type="GO" id="GO:0003677">
    <property type="term" value="F:DNA binding"/>
    <property type="evidence" value="ECO:0007669"/>
    <property type="project" value="UniProtKB-KW"/>
</dbReference>
<dbReference type="FunFam" id="2.40.50.400:FF:000001">
    <property type="entry name" value="SSB protein"/>
    <property type="match status" value="1"/>
</dbReference>
<dbReference type="Gene3D" id="2.40.50.400">
    <property type="entry name" value="Lactococcus phage single-stranded DNA binding protein"/>
    <property type="match status" value="1"/>
</dbReference>
<dbReference type="InterPro" id="IPR038621">
    <property type="entry name" value="Lacto_phage_SSB_sf"/>
</dbReference>
<dbReference type="InterPro" id="IPR031900">
    <property type="entry name" value="Phage_SSB"/>
</dbReference>
<dbReference type="Pfam" id="PF16773">
    <property type="entry name" value="Phage_SSB"/>
    <property type="match status" value="1"/>
</dbReference>
<reference key="1">
    <citation type="journal article" date="1997" name="Mol. Microbiol.">
        <title>Analysis of the DNA sequence, gene expression, origin of replication and modular structure of the Lactococcus lactis lytic bacteriophage sk1.</title>
        <authorList>
            <person name="Chandry P.S."/>
            <person name="Moore S.C."/>
            <person name="Boyce J.D."/>
            <person name="Davidson B.E."/>
            <person name="Hillier A.J."/>
        </authorList>
    </citation>
    <scope>NUCLEOTIDE SEQUENCE [LARGE SCALE GENOMIC DNA]</scope>
</reference>
<feature type="chain" id="PRO_0000438265" description="SSB protein">
    <location>
        <begin position="1"/>
        <end position="119"/>
    </location>
</feature>
<feature type="region of interest" description="Disordered" evidence="2">
    <location>
        <begin position="96"/>
        <end position="119"/>
    </location>
</feature>
<organismHost>
    <name type="scientific">Lactococcus lactis</name>
    <dbReference type="NCBI Taxonomy" id="1358"/>
</organismHost>